<keyword id="KW-0963">Cytoplasm</keyword>
<keyword id="KW-0570">Pentose shunt</keyword>
<keyword id="KW-0704">Schiff base</keyword>
<keyword id="KW-0808">Transferase</keyword>
<organism>
    <name type="scientific">Burkholderia pseudomallei (strain 668)</name>
    <dbReference type="NCBI Taxonomy" id="320373"/>
    <lineage>
        <taxon>Bacteria</taxon>
        <taxon>Pseudomonadati</taxon>
        <taxon>Pseudomonadota</taxon>
        <taxon>Betaproteobacteria</taxon>
        <taxon>Burkholderiales</taxon>
        <taxon>Burkholderiaceae</taxon>
        <taxon>Burkholderia</taxon>
        <taxon>pseudomallei group</taxon>
    </lineage>
</organism>
<gene>
    <name evidence="2" type="primary">tal</name>
    <name type="ordered locus">BURPS668_1166</name>
</gene>
<evidence type="ECO:0000250" key="1"/>
<evidence type="ECO:0000255" key="2">
    <source>
        <dbReference type="HAMAP-Rule" id="MF_00492"/>
    </source>
</evidence>
<protein>
    <recommendedName>
        <fullName evidence="2">Transaldolase</fullName>
        <ecNumber evidence="2">2.2.1.2</ecNumber>
    </recommendedName>
</protein>
<name>TAL_BURP6</name>
<feature type="chain" id="PRO_1000014493" description="Transaldolase">
    <location>
        <begin position="1"/>
        <end position="317"/>
    </location>
</feature>
<feature type="active site" description="Schiff-base intermediate with substrate" evidence="2">
    <location>
        <position position="126"/>
    </location>
</feature>
<comment type="function">
    <text evidence="2">Transaldolase is important for the balance of metabolites in the pentose-phosphate pathway.</text>
</comment>
<comment type="catalytic activity">
    <reaction evidence="2">
        <text>D-sedoheptulose 7-phosphate + D-glyceraldehyde 3-phosphate = D-erythrose 4-phosphate + beta-D-fructose 6-phosphate</text>
        <dbReference type="Rhea" id="RHEA:17053"/>
        <dbReference type="ChEBI" id="CHEBI:16897"/>
        <dbReference type="ChEBI" id="CHEBI:57483"/>
        <dbReference type="ChEBI" id="CHEBI:57634"/>
        <dbReference type="ChEBI" id="CHEBI:59776"/>
        <dbReference type="EC" id="2.2.1.2"/>
    </reaction>
</comment>
<comment type="pathway">
    <text evidence="2">Carbohydrate degradation; pentose phosphate pathway; D-glyceraldehyde 3-phosphate and beta-D-fructose 6-phosphate from D-ribose 5-phosphate and D-xylulose 5-phosphate (non-oxidative stage): step 2/3.</text>
</comment>
<comment type="subunit">
    <text evidence="1">Homodimer.</text>
</comment>
<comment type="subcellular location">
    <subcellularLocation>
        <location evidence="2">Cytoplasm</location>
    </subcellularLocation>
</comment>
<comment type="similarity">
    <text evidence="2">Belongs to the transaldolase family. Type 1 subfamily.</text>
</comment>
<proteinExistence type="inferred from homology"/>
<accession>A3N794</accession>
<reference key="1">
    <citation type="journal article" date="2010" name="Genome Biol. Evol.">
        <title>Continuing evolution of Burkholderia mallei through genome reduction and large-scale rearrangements.</title>
        <authorList>
            <person name="Losada L."/>
            <person name="Ronning C.M."/>
            <person name="DeShazer D."/>
            <person name="Woods D."/>
            <person name="Fedorova N."/>
            <person name="Kim H.S."/>
            <person name="Shabalina S.A."/>
            <person name="Pearson T.R."/>
            <person name="Brinkac L."/>
            <person name="Tan P."/>
            <person name="Nandi T."/>
            <person name="Crabtree J."/>
            <person name="Badger J."/>
            <person name="Beckstrom-Sternberg S."/>
            <person name="Saqib M."/>
            <person name="Schutzer S.E."/>
            <person name="Keim P."/>
            <person name="Nierman W.C."/>
        </authorList>
    </citation>
    <scope>NUCLEOTIDE SEQUENCE [LARGE SCALE GENOMIC DNA]</scope>
    <source>
        <strain>668</strain>
    </source>
</reference>
<sequence>MTTALDQLKQYTTVVADTGDFQQLAQYKPQDATTNPSLILKAVQKDAYRPILEKTVRDHAGESAGFIIDRLLIAFGTEILKLIPGRVSTEVDARLSFDTQRSIDKGREIIKLYEAAGVGRERVLIKLASTWEGIRAAEVLQREGIRCNMTLLFSLVQAAACAEAGAQLISPFVGRIYDWYKKQKGADWDEAQDGGANDPGVQSVRRIYTYYKHFGYRTEVMGASFRTTSQITELAGCDLLTISPELLQKLHDSTEAVARKLSPDEARDARLERVAIDESSFRFQLNDDAMATEKLAEGIRLFSADAVKLEKMIEALR</sequence>
<dbReference type="EC" id="2.2.1.2" evidence="2"/>
<dbReference type="EMBL" id="CP000570">
    <property type="protein sequence ID" value="ABN83890.1"/>
    <property type="molecule type" value="Genomic_DNA"/>
</dbReference>
<dbReference type="RefSeq" id="WP_004522473.1">
    <property type="nucleotide sequence ID" value="NC_009074.1"/>
</dbReference>
<dbReference type="SMR" id="A3N794"/>
<dbReference type="GeneID" id="93059591"/>
<dbReference type="KEGG" id="bpd:BURPS668_1166"/>
<dbReference type="HOGENOM" id="CLU_047470_0_1_4"/>
<dbReference type="UniPathway" id="UPA00115">
    <property type="reaction ID" value="UER00414"/>
</dbReference>
<dbReference type="GO" id="GO:0005737">
    <property type="term" value="C:cytoplasm"/>
    <property type="evidence" value="ECO:0007669"/>
    <property type="project" value="UniProtKB-SubCell"/>
</dbReference>
<dbReference type="GO" id="GO:0004801">
    <property type="term" value="F:transaldolase activity"/>
    <property type="evidence" value="ECO:0000250"/>
    <property type="project" value="UniProtKB"/>
</dbReference>
<dbReference type="GO" id="GO:0005975">
    <property type="term" value="P:carbohydrate metabolic process"/>
    <property type="evidence" value="ECO:0007669"/>
    <property type="project" value="InterPro"/>
</dbReference>
<dbReference type="GO" id="GO:0009052">
    <property type="term" value="P:pentose-phosphate shunt, non-oxidative branch"/>
    <property type="evidence" value="ECO:0007669"/>
    <property type="project" value="TreeGrafter"/>
</dbReference>
<dbReference type="CDD" id="cd00957">
    <property type="entry name" value="Transaldolase_TalAB"/>
    <property type="match status" value="1"/>
</dbReference>
<dbReference type="FunFam" id="3.20.20.70:FF:000002">
    <property type="entry name" value="Transaldolase"/>
    <property type="match status" value="1"/>
</dbReference>
<dbReference type="Gene3D" id="3.20.20.70">
    <property type="entry name" value="Aldolase class I"/>
    <property type="match status" value="1"/>
</dbReference>
<dbReference type="HAMAP" id="MF_00492">
    <property type="entry name" value="Transaldolase_1"/>
    <property type="match status" value="1"/>
</dbReference>
<dbReference type="InterPro" id="IPR013785">
    <property type="entry name" value="Aldolase_TIM"/>
</dbReference>
<dbReference type="InterPro" id="IPR001585">
    <property type="entry name" value="TAL/FSA"/>
</dbReference>
<dbReference type="InterPro" id="IPR004730">
    <property type="entry name" value="Transaldolase_1"/>
</dbReference>
<dbReference type="InterPro" id="IPR018225">
    <property type="entry name" value="Transaldolase_AS"/>
</dbReference>
<dbReference type="NCBIfam" id="TIGR00874">
    <property type="entry name" value="talAB"/>
    <property type="match status" value="1"/>
</dbReference>
<dbReference type="PANTHER" id="PTHR10683">
    <property type="entry name" value="TRANSALDOLASE"/>
    <property type="match status" value="1"/>
</dbReference>
<dbReference type="PANTHER" id="PTHR10683:SF18">
    <property type="entry name" value="TRANSALDOLASE"/>
    <property type="match status" value="1"/>
</dbReference>
<dbReference type="Pfam" id="PF00923">
    <property type="entry name" value="TAL_FSA"/>
    <property type="match status" value="1"/>
</dbReference>
<dbReference type="SUPFAM" id="SSF51569">
    <property type="entry name" value="Aldolase"/>
    <property type="match status" value="1"/>
</dbReference>
<dbReference type="PROSITE" id="PS01054">
    <property type="entry name" value="TRANSALDOLASE_1"/>
    <property type="match status" value="1"/>
</dbReference>
<dbReference type="PROSITE" id="PS00958">
    <property type="entry name" value="TRANSALDOLASE_2"/>
    <property type="match status" value="1"/>
</dbReference>